<feature type="chain" id="PRO_1000116750" description="Elongation factor Ts">
    <location>
        <begin position="1"/>
        <end position="293"/>
    </location>
</feature>
<feature type="region of interest" description="Involved in Mg(2+) ion dislocation from EF-Tu" evidence="1">
    <location>
        <begin position="80"/>
        <end position="83"/>
    </location>
</feature>
<reference key="1">
    <citation type="submission" date="2008-06" db="EMBL/GenBank/DDBJ databases">
        <title>Lactobacillus casei BL23 complete genome sequence.</title>
        <authorList>
            <person name="Maze A."/>
            <person name="Boel G."/>
            <person name="Bourand A."/>
            <person name="Loux V."/>
            <person name="Gibrat J.F."/>
            <person name="Zuniga M."/>
            <person name="Hartke A."/>
            <person name="Deutscher J."/>
        </authorList>
    </citation>
    <scope>NUCLEOTIDE SEQUENCE [LARGE SCALE GENOMIC DNA]</scope>
    <source>
        <strain>BL23</strain>
    </source>
</reference>
<comment type="function">
    <text evidence="1">Associates with the EF-Tu.GDP complex and induces the exchange of GDP to GTP. It remains bound to the aminoacyl-tRNA.EF-Tu.GTP complex up to the GTP hydrolysis stage on the ribosome.</text>
</comment>
<comment type="subcellular location">
    <subcellularLocation>
        <location evidence="1">Cytoplasm</location>
    </subcellularLocation>
</comment>
<comment type="similarity">
    <text evidence="1">Belongs to the EF-Ts family.</text>
</comment>
<evidence type="ECO:0000255" key="1">
    <source>
        <dbReference type="HAMAP-Rule" id="MF_00050"/>
    </source>
</evidence>
<dbReference type="EMBL" id="FM177140">
    <property type="protein sequence ID" value="CAQ66878.1"/>
    <property type="molecule type" value="Genomic_DNA"/>
</dbReference>
<dbReference type="SMR" id="B3WES7"/>
<dbReference type="KEGG" id="lcb:LCABL_17980"/>
<dbReference type="HOGENOM" id="CLU_047155_0_2_9"/>
<dbReference type="GO" id="GO:0005737">
    <property type="term" value="C:cytoplasm"/>
    <property type="evidence" value="ECO:0007669"/>
    <property type="project" value="UniProtKB-SubCell"/>
</dbReference>
<dbReference type="GO" id="GO:0003746">
    <property type="term" value="F:translation elongation factor activity"/>
    <property type="evidence" value="ECO:0007669"/>
    <property type="project" value="UniProtKB-UniRule"/>
</dbReference>
<dbReference type="CDD" id="cd14275">
    <property type="entry name" value="UBA_EF-Ts"/>
    <property type="match status" value="1"/>
</dbReference>
<dbReference type="FunFam" id="1.10.8.10:FF:000001">
    <property type="entry name" value="Elongation factor Ts"/>
    <property type="match status" value="1"/>
</dbReference>
<dbReference type="Gene3D" id="1.10.286.20">
    <property type="match status" value="1"/>
</dbReference>
<dbReference type="Gene3D" id="1.10.8.10">
    <property type="entry name" value="DNA helicase RuvA subunit, C-terminal domain"/>
    <property type="match status" value="1"/>
</dbReference>
<dbReference type="Gene3D" id="3.30.479.20">
    <property type="entry name" value="Elongation factor Ts, dimerisation domain"/>
    <property type="match status" value="2"/>
</dbReference>
<dbReference type="HAMAP" id="MF_00050">
    <property type="entry name" value="EF_Ts"/>
    <property type="match status" value="1"/>
</dbReference>
<dbReference type="InterPro" id="IPR036402">
    <property type="entry name" value="EF-Ts_dimer_sf"/>
</dbReference>
<dbReference type="InterPro" id="IPR001816">
    <property type="entry name" value="Transl_elong_EFTs/EF1B"/>
</dbReference>
<dbReference type="InterPro" id="IPR014039">
    <property type="entry name" value="Transl_elong_EFTs/EF1B_dimer"/>
</dbReference>
<dbReference type="InterPro" id="IPR018101">
    <property type="entry name" value="Transl_elong_Ts_CS"/>
</dbReference>
<dbReference type="InterPro" id="IPR009060">
    <property type="entry name" value="UBA-like_sf"/>
</dbReference>
<dbReference type="NCBIfam" id="TIGR00116">
    <property type="entry name" value="tsf"/>
    <property type="match status" value="1"/>
</dbReference>
<dbReference type="PANTHER" id="PTHR11741">
    <property type="entry name" value="ELONGATION FACTOR TS"/>
    <property type="match status" value="1"/>
</dbReference>
<dbReference type="PANTHER" id="PTHR11741:SF0">
    <property type="entry name" value="ELONGATION FACTOR TS, MITOCHONDRIAL"/>
    <property type="match status" value="1"/>
</dbReference>
<dbReference type="Pfam" id="PF00889">
    <property type="entry name" value="EF_TS"/>
    <property type="match status" value="1"/>
</dbReference>
<dbReference type="SUPFAM" id="SSF54713">
    <property type="entry name" value="Elongation factor Ts (EF-Ts), dimerisation domain"/>
    <property type="match status" value="2"/>
</dbReference>
<dbReference type="SUPFAM" id="SSF46934">
    <property type="entry name" value="UBA-like"/>
    <property type="match status" value="1"/>
</dbReference>
<dbReference type="PROSITE" id="PS01126">
    <property type="entry name" value="EF_TS_1"/>
    <property type="match status" value="1"/>
</dbReference>
<dbReference type="PROSITE" id="PS01127">
    <property type="entry name" value="EF_TS_2"/>
    <property type="match status" value="1"/>
</dbReference>
<sequence>MAQITAAQVKELRDRTQVGMMDAKKALVAADGDMDKAIDVLREKGLAKAAKKSGNIAAEGLAEIAVNGNTAAIIEVNSETDFVASNDQFKDYVNNVAAAIAANKPADLEAAKATKMSDGQTVDEGAIALTTVIGEKISLRRFQVVEKTDNEHFGKYLHNGGQIAALTVIEGADDDTAKDVAMHVAAINPEYLDRTKVPAEELKHQTDIFTEETKNEGKPEKIVPRIVEGRVNKWLGEISLVDQEFVKDPDQTVAKYVAAKGGKVKGFVRYEVGEGIEKKQENFADEVMDQIKG</sequence>
<accession>B3WES7</accession>
<keyword id="KW-0963">Cytoplasm</keyword>
<keyword id="KW-0251">Elongation factor</keyword>
<keyword id="KW-0648">Protein biosynthesis</keyword>
<proteinExistence type="inferred from homology"/>
<organism>
    <name type="scientific">Lacticaseibacillus casei (strain BL23)</name>
    <name type="common">Lactobacillus casei</name>
    <dbReference type="NCBI Taxonomy" id="543734"/>
    <lineage>
        <taxon>Bacteria</taxon>
        <taxon>Bacillati</taxon>
        <taxon>Bacillota</taxon>
        <taxon>Bacilli</taxon>
        <taxon>Lactobacillales</taxon>
        <taxon>Lactobacillaceae</taxon>
        <taxon>Lacticaseibacillus</taxon>
    </lineage>
</organism>
<name>EFTS_LACCB</name>
<gene>
    <name evidence="1" type="primary">tsf</name>
    <name type="ordered locus">LCABL_17980</name>
</gene>
<protein>
    <recommendedName>
        <fullName evidence="1">Elongation factor Ts</fullName>
        <shortName evidence="1">EF-Ts</shortName>
    </recommendedName>
</protein>